<protein>
    <recommendedName>
        <fullName evidence="1">Aspartate carbamoyltransferase catalytic subunit</fullName>
        <ecNumber evidence="1">2.1.3.2</ecNumber>
    </recommendedName>
    <alternativeName>
        <fullName evidence="1">Aspartate transcarbamylase</fullName>
        <shortName evidence="1">ATCase</shortName>
    </alternativeName>
</protein>
<proteinExistence type="inferred from homology"/>
<feature type="chain" id="PRO_1000116129" description="Aspartate carbamoyltransferase catalytic subunit">
    <location>
        <begin position="1"/>
        <end position="310"/>
    </location>
</feature>
<feature type="binding site" evidence="1">
    <location>
        <position position="55"/>
    </location>
    <ligand>
        <name>carbamoyl phosphate</name>
        <dbReference type="ChEBI" id="CHEBI:58228"/>
    </ligand>
</feature>
<feature type="binding site" evidence="1">
    <location>
        <position position="56"/>
    </location>
    <ligand>
        <name>carbamoyl phosphate</name>
        <dbReference type="ChEBI" id="CHEBI:58228"/>
    </ligand>
</feature>
<feature type="binding site" evidence="1">
    <location>
        <position position="85"/>
    </location>
    <ligand>
        <name>L-aspartate</name>
        <dbReference type="ChEBI" id="CHEBI:29991"/>
    </ligand>
</feature>
<feature type="binding site" evidence="1">
    <location>
        <position position="106"/>
    </location>
    <ligand>
        <name>carbamoyl phosphate</name>
        <dbReference type="ChEBI" id="CHEBI:58228"/>
    </ligand>
</feature>
<feature type="binding site" evidence="1">
    <location>
        <position position="135"/>
    </location>
    <ligand>
        <name>carbamoyl phosphate</name>
        <dbReference type="ChEBI" id="CHEBI:58228"/>
    </ligand>
</feature>
<feature type="binding site" evidence="1">
    <location>
        <position position="138"/>
    </location>
    <ligand>
        <name>carbamoyl phosphate</name>
        <dbReference type="ChEBI" id="CHEBI:58228"/>
    </ligand>
</feature>
<feature type="binding site" evidence="1">
    <location>
        <position position="168"/>
    </location>
    <ligand>
        <name>L-aspartate</name>
        <dbReference type="ChEBI" id="CHEBI:29991"/>
    </ligand>
</feature>
<feature type="binding site" evidence="1">
    <location>
        <position position="230"/>
    </location>
    <ligand>
        <name>L-aspartate</name>
        <dbReference type="ChEBI" id="CHEBI:29991"/>
    </ligand>
</feature>
<feature type="binding site" evidence="1">
    <location>
        <position position="268"/>
    </location>
    <ligand>
        <name>carbamoyl phosphate</name>
        <dbReference type="ChEBI" id="CHEBI:58228"/>
    </ligand>
</feature>
<feature type="binding site" evidence="1">
    <location>
        <position position="269"/>
    </location>
    <ligand>
        <name>carbamoyl phosphate</name>
        <dbReference type="ChEBI" id="CHEBI:58228"/>
    </ligand>
</feature>
<evidence type="ECO:0000255" key="1">
    <source>
        <dbReference type="HAMAP-Rule" id="MF_00001"/>
    </source>
</evidence>
<comment type="function">
    <text evidence="1">Catalyzes the condensation of carbamoyl phosphate and aspartate to form carbamoyl aspartate and inorganic phosphate, the committed step in the de novo pyrimidine nucleotide biosynthesis pathway.</text>
</comment>
<comment type="catalytic activity">
    <reaction evidence="1">
        <text>carbamoyl phosphate + L-aspartate = N-carbamoyl-L-aspartate + phosphate + H(+)</text>
        <dbReference type="Rhea" id="RHEA:20013"/>
        <dbReference type="ChEBI" id="CHEBI:15378"/>
        <dbReference type="ChEBI" id="CHEBI:29991"/>
        <dbReference type="ChEBI" id="CHEBI:32814"/>
        <dbReference type="ChEBI" id="CHEBI:43474"/>
        <dbReference type="ChEBI" id="CHEBI:58228"/>
        <dbReference type="EC" id="2.1.3.2"/>
    </reaction>
</comment>
<comment type="pathway">
    <text evidence="1">Pyrimidine metabolism; UMP biosynthesis via de novo pathway; (S)-dihydroorotate from bicarbonate: step 2/3.</text>
</comment>
<comment type="subunit">
    <text evidence="1">Heterododecamer (2C3:3R2) of six catalytic PyrB chains organized as two trimers (C3), and six regulatory PyrI chains organized as three dimers (R2).</text>
</comment>
<comment type="similarity">
    <text evidence="1">Belongs to the aspartate/ornithine carbamoyltransferase superfamily. ATCase family.</text>
</comment>
<reference key="1">
    <citation type="journal article" date="2009" name="Science">
        <title>The dynamics and time scale of ongoing genomic erosion in symbiotic bacteria.</title>
        <authorList>
            <person name="Moran N.A."/>
            <person name="McLaughlin H.J."/>
            <person name="Sorek R."/>
        </authorList>
    </citation>
    <scope>NUCLEOTIDE SEQUENCE [LARGE SCALE GENOMIC DNA]</scope>
    <source>
        <strain>Tuc7</strain>
    </source>
</reference>
<accession>B8D7Q6</accession>
<organism>
    <name type="scientific">Buchnera aphidicola subsp. Acyrthosiphon pisum (strain Tuc7)</name>
    <dbReference type="NCBI Taxonomy" id="561501"/>
    <lineage>
        <taxon>Bacteria</taxon>
        <taxon>Pseudomonadati</taxon>
        <taxon>Pseudomonadota</taxon>
        <taxon>Gammaproteobacteria</taxon>
        <taxon>Enterobacterales</taxon>
        <taxon>Erwiniaceae</taxon>
        <taxon>Buchnera</taxon>
    </lineage>
</organism>
<name>PYRB_BUCAT</name>
<keyword id="KW-0665">Pyrimidine biosynthesis</keyword>
<keyword id="KW-0808">Transferase</keyword>
<sequence>MRNSLYKKNIISINDLQRNELELVLNKSAMLKRTPQPNLLKNKVIASCFFEASTRTRLSFETAIYRLGASIVGFSDGNNISLEKKGETLTDTISVISSYVDAIIIRHPQEGSARLAAEFSNKKPIFNAGDGANQHPTQTLLDLFTIQETQNRLTQLNIAIVGDLKYGRTVHSLTQALAKFKHNKFYFISPDALKMPNYINNMLDKKEIYWKRHNNIEEIISEIDILYMTRIQKERLDSTEYANAKSKFVLRAAILKNARNNMKILHPLPRIDEIDRDVDYTPYAWYFKQAANGIYARQAILSLVLIEKHL</sequence>
<gene>
    <name evidence="1" type="primary">pyrB</name>
    <name type="ordered locus">BUAPTUC7_363</name>
</gene>
<dbReference type="EC" id="2.1.3.2" evidence="1"/>
<dbReference type="EMBL" id="CP001158">
    <property type="protein sequence ID" value="ACL30171.1"/>
    <property type="molecule type" value="Genomic_DNA"/>
</dbReference>
<dbReference type="RefSeq" id="WP_009874327.1">
    <property type="nucleotide sequence ID" value="NC_011834.1"/>
</dbReference>
<dbReference type="SMR" id="B8D7Q6"/>
<dbReference type="KEGG" id="bau:BUAPTUC7_363"/>
<dbReference type="HOGENOM" id="CLU_043846_1_2_6"/>
<dbReference type="UniPathway" id="UPA00070">
    <property type="reaction ID" value="UER00116"/>
</dbReference>
<dbReference type="GO" id="GO:0005829">
    <property type="term" value="C:cytosol"/>
    <property type="evidence" value="ECO:0007669"/>
    <property type="project" value="TreeGrafter"/>
</dbReference>
<dbReference type="GO" id="GO:0016597">
    <property type="term" value="F:amino acid binding"/>
    <property type="evidence" value="ECO:0007669"/>
    <property type="project" value="InterPro"/>
</dbReference>
<dbReference type="GO" id="GO:0004070">
    <property type="term" value="F:aspartate carbamoyltransferase activity"/>
    <property type="evidence" value="ECO:0007669"/>
    <property type="project" value="UniProtKB-UniRule"/>
</dbReference>
<dbReference type="GO" id="GO:0006207">
    <property type="term" value="P:'de novo' pyrimidine nucleobase biosynthetic process"/>
    <property type="evidence" value="ECO:0007669"/>
    <property type="project" value="InterPro"/>
</dbReference>
<dbReference type="GO" id="GO:0044205">
    <property type="term" value="P:'de novo' UMP biosynthetic process"/>
    <property type="evidence" value="ECO:0007669"/>
    <property type="project" value="UniProtKB-UniRule"/>
</dbReference>
<dbReference type="GO" id="GO:0006520">
    <property type="term" value="P:amino acid metabolic process"/>
    <property type="evidence" value="ECO:0007669"/>
    <property type="project" value="InterPro"/>
</dbReference>
<dbReference type="FunFam" id="3.40.50.1370:FF:000001">
    <property type="entry name" value="Aspartate carbamoyltransferase"/>
    <property type="match status" value="1"/>
</dbReference>
<dbReference type="FunFam" id="3.40.50.1370:FF:000002">
    <property type="entry name" value="Aspartate carbamoyltransferase 2"/>
    <property type="match status" value="1"/>
</dbReference>
<dbReference type="Gene3D" id="3.40.50.1370">
    <property type="entry name" value="Aspartate/ornithine carbamoyltransferase"/>
    <property type="match status" value="2"/>
</dbReference>
<dbReference type="HAMAP" id="MF_00001">
    <property type="entry name" value="Asp_carb_tr"/>
    <property type="match status" value="1"/>
</dbReference>
<dbReference type="InterPro" id="IPR006132">
    <property type="entry name" value="Asp/Orn_carbamoyltranf_P-bd"/>
</dbReference>
<dbReference type="InterPro" id="IPR006130">
    <property type="entry name" value="Asp/Orn_carbamoylTrfase"/>
</dbReference>
<dbReference type="InterPro" id="IPR036901">
    <property type="entry name" value="Asp/Orn_carbamoylTrfase_sf"/>
</dbReference>
<dbReference type="InterPro" id="IPR002082">
    <property type="entry name" value="Asp_carbamoyltransf"/>
</dbReference>
<dbReference type="InterPro" id="IPR006131">
    <property type="entry name" value="Asp_carbamoyltransf_Asp/Orn-bd"/>
</dbReference>
<dbReference type="NCBIfam" id="TIGR00670">
    <property type="entry name" value="asp_carb_tr"/>
    <property type="match status" value="1"/>
</dbReference>
<dbReference type="NCBIfam" id="NF002032">
    <property type="entry name" value="PRK00856.1"/>
    <property type="match status" value="1"/>
</dbReference>
<dbReference type="PANTHER" id="PTHR45753:SF6">
    <property type="entry name" value="ASPARTATE CARBAMOYLTRANSFERASE"/>
    <property type="match status" value="1"/>
</dbReference>
<dbReference type="PANTHER" id="PTHR45753">
    <property type="entry name" value="ORNITHINE CARBAMOYLTRANSFERASE, MITOCHONDRIAL"/>
    <property type="match status" value="1"/>
</dbReference>
<dbReference type="Pfam" id="PF00185">
    <property type="entry name" value="OTCace"/>
    <property type="match status" value="1"/>
</dbReference>
<dbReference type="Pfam" id="PF02729">
    <property type="entry name" value="OTCace_N"/>
    <property type="match status" value="1"/>
</dbReference>
<dbReference type="PRINTS" id="PR00100">
    <property type="entry name" value="AOTCASE"/>
</dbReference>
<dbReference type="PRINTS" id="PR00101">
    <property type="entry name" value="ATCASE"/>
</dbReference>
<dbReference type="SUPFAM" id="SSF53671">
    <property type="entry name" value="Aspartate/ornithine carbamoyltransferase"/>
    <property type="match status" value="1"/>
</dbReference>
<dbReference type="PROSITE" id="PS00097">
    <property type="entry name" value="CARBAMOYLTRANSFERASE"/>
    <property type="match status" value="1"/>
</dbReference>